<feature type="initiator methionine" description="Removed" evidence="1">
    <location>
        <position position="1"/>
    </location>
</feature>
<feature type="chain" id="PRO_0000054370" description="HTH-type transcriptional regulator MgrA">
    <location>
        <begin position="2"/>
        <end position="147"/>
    </location>
</feature>
<feature type="domain" description="HTH marR-type" evidence="2">
    <location>
        <begin position="8"/>
        <end position="139"/>
    </location>
</feature>
<feature type="DNA-binding region" description="H-T-H motif" evidence="2">
    <location>
        <begin position="55"/>
        <end position="78"/>
    </location>
</feature>
<organism>
    <name type="scientific">Staphylococcus aureus (strain MRSA252)</name>
    <dbReference type="NCBI Taxonomy" id="282458"/>
    <lineage>
        <taxon>Bacteria</taxon>
        <taxon>Bacillati</taxon>
        <taxon>Bacillota</taxon>
        <taxon>Bacilli</taxon>
        <taxon>Bacillales</taxon>
        <taxon>Staphylococcaceae</taxon>
        <taxon>Staphylococcus</taxon>
    </lineage>
</organism>
<evidence type="ECO:0000250" key="1"/>
<evidence type="ECO:0000255" key="2">
    <source>
        <dbReference type="PROSITE-ProRule" id="PRU00345"/>
    </source>
</evidence>
<evidence type="ECO:0000305" key="3"/>
<sequence>MSDQHNLKEQLCFSLYNAQRQVNRYYSNKVFKKYNLTYPQFLVLTILWDESPVNVKKVVTELALDTGTVSPLLKRMEQVDLIKRERSEVDQREVFIHLTDKSETIRPELSNASDKVASASSLSQDEVKELNRLLGKVIHAFDETKEK</sequence>
<keyword id="KW-0010">Activator</keyword>
<keyword id="KW-0963">Cytoplasm</keyword>
<keyword id="KW-0238">DNA-binding</keyword>
<keyword id="KW-0678">Repressor</keyword>
<keyword id="KW-0804">Transcription</keyword>
<keyword id="KW-0805">Transcription regulation</keyword>
<keyword id="KW-0843">Virulence</keyword>
<proteinExistence type="inferred from homology"/>
<dbReference type="EMBL" id="BX571856">
    <property type="protein sequence ID" value="CAG39749.1"/>
    <property type="molecule type" value="Genomic_DNA"/>
</dbReference>
<dbReference type="RefSeq" id="WP_001283444.1">
    <property type="nucleotide sequence ID" value="NC_002952.2"/>
</dbReference>
<dbReference type="SMR" id="Q6GIV6"/>
<dbReference type="GeneID" id="98345028"/>
<dbReference type="KEGG" id="sar:SAR0739"/>
<dbReference type="HOGENOM" id="CLU_083287_3_2_9"/>
<dbReference type="Proteomes" id="UP000000596">
    <property type="component" value="Chromosome"/>
</dbReference>
<dbReference type="GO" id="GO:0005737">
    <property type="term" value="C:cytoplasm"/>
    <property type="evidence" value="ECO:0007669"/>
    <property type="project" value="UniProtKB-SubCell"/>
</dbReference>
<dbReference type="GO" id="GO:0003677">
    <property type="term" value="F:DNA binding"/>
    <property type="evidence" value="ECO:0007669"/>
    <property type="project" value="UniProtKB-KW"/>
</dbReference>
<dbReference type="GO" id="GO:0003700">
    <property type="term" value="F:DNA-binding transcription factor activity"/>
    <property type="evidence" value="ECO:0007669"/>
    <property type="project" value="InterPro"/>
</dbReference>
<dbReference type="GO" id="GO:0006950">
    <property type="term" value="P:response to stress"/>
    <property type="evidence" value="ECO:0007669"/>
    <property type="project" value="TreeGrafter"/>
</dbReference>
<dbReference type="FunFam" id="1.10.10.10:FF:000163">
    <property type="entry name" value="MarR family transcriptional regulator"/>
    <property type="match status" value="1"/>
</dbReference>
<dbReference type="Gene3D" id="1.10.10.10">
    <property type="entry name" value="Winged helix-like DNA-binding domain superfamily/Winged helix DNA-binding domain"/>
    <property type="match status" value="1"/>
</dbReference>
<dbReference type="InterPro" id="IPR000835">
    <property type="entry name" value="HTH_MarR-typ"/>
</dbReference>
<dbReference type="InterPro" id="IPR039422">
    <property type="entry name" value="MarR/SlyA-like"/>
</dbReference>
<dbReference type="InterPro" id="IPR055166">
    <property type="entry name" value="Transc_reg_Sar_Rot_HTH"/>
</dbReference>
<dbReference type="InterPro" id="IPR023187">
    <property type="entry name" value="Tscrpt_reg_MarR-type_CS"/>
</dbReference>
<dbReference type="InterPro" id="IPR036388">
    <property type="entry name" value="WH-like_DNA-bd_sf"/>
</dbReference>
<dbReference type="InterPro" id="IPR036390">
    <property type="entry name" value="WH_DNA-bd_sf"/>
</dbReference>
<dbReference type="PANTHER" id="PTHR33164:SF5">
    <property type="entry name" value="ORGANIC HYDROPEROXIDE RESISTANCE TRANSCRIPTIONAL REGULATOR"/>
    <property type="match status" value="1"/>
</dbReference>
<dbReference type="PANTHER" id="PTHR33164">
    <property type="entry name" value="TRANSCRIPTIONAL REGULATOR, MARR FAMILY"/>
    <property type="match status" value="1"/>
</dbReference>
<dbReference type="Pfam" id="PF22381">
    <property type="entry name" value="Staph_reg_Sar_Rot"/>
    <property type="match status" value="1"/>
</dbReference>
<dbReference type="SMART" id="SM00347">
    <property type="entry name" value="HTH_MARR"/>
    <property type="match status" value="1"/>
</dbReference>
<dbReference type="SUPFAM" id="SSF46785">
    <property type="entry name" value="Winged helix' DNA-binding domain"/>
    <property type="match status" value="1"/>
</dbReference>
<dbReference type="PROSITE" id="PS01117">
    <property type="entry name" value="HTH_MARR_1"/>
    <property type="match status" value="1"/>
</dbReference>
<dbReference type="PROSITE" id="PS50995">
    <property type="entry name" value="HTH_MARR_2"/>
    <property type="match status" value="1"/>
</dbReference>
<accession>Q6GIV6</accession>
<gene>
    <name type="primary">mgrA</name>
    <name type="synonym">norR</name>
    <name type="ordered locus">SAR0739</name>
</gene>
<comment type="function">
    <text evidence="1">Regulatory protein involved in autolytic activity, multidrug resistance and virulence.</text>
</comment>
<comment type="subcellular location">
    <subcellularLocation>
        <location evidence="3">Cytoplasm</location>
    </subcellularLocation>
</comment>
<protein>
    <recommendedName>
        <fullName>HTH-type transcriptional regulator MgrA</fullName>
    </recommendedName>
</protein>
<name>MGRA_STAAR</name>
<reference key="1">
    <citation type="journal article" date="2004" name="Proc. Natl. Acad. Sci. U.S.A.">
        <title>Complete genomes of two clinical Staphylococcus aureus strains: evidence for the rapid evolution of virulence and drug resistance.</title>
        <authorList>
            <person name="Holden M.T.G."/>
            <person name="Feil E.J."/>
            <person name="Lindsay J.A."/>
            <person name="Peacock S.J."/>
            <person name="Day N.P.J."/>
            <person name="Enright M.C."/>
            <person name="Foster T.J."/>
            <person name="Moore C.E."/>
            <person name="Hurst L."/>
            <person name="Atkin R."/>
            <person name="Barron A."/>
            <person name="Bason N."/>
            <person name="Bentley S.D."/>
            <person name="Chillingworth C."/>
            <person name="Chillingworth T."/>
            <person name="Churcher C."/>
            <person name="Clark L."/>
            <person name="Corton C."/>
            <person name="Cronin A."/>
            <person name="Doggett J."/>
            <person name="Dowd L."/>
            <person name="Feltwell T."/>
            <person name="Hance Z."/>
            <person name="Harris B."/>
            <person name="Hauser H."/>
            <person name="Holroyd S."/>
            <person name="Jagels K."/>
            <person name="James K.D."/>
            <person name="Lennard N."/>
            <person name="Line A."/>
            <person name="Mayes R."/>
            <person name="Moule S."/>
            <person name="Mungall K."/>
            <person name="Ormond D."/>
            <person name="Quail M.A."/>
            <person name="Rabbinowitsch E."/>
            <person name="Rutherford K.M."/>
            <person name="Sanders M."/>
            <person name="Sharp S."/>
            <person name="Simmonds M."/>
            <person name="Stevens K."/>
            <person name="Whitehead S."/>
            <person name="Barrell B.G."/>
            <person name="Spratt B.G."/>
            <person name="Parkhill J."/>
        </authorList>
    </citation>
    <scope>NUCLEOTIDE SEQUENCE [LARGE SCALE GENOMIC DNA]</scope>
    <source>
        <strain>MRSA252</strain>
    </source>
</reference>